<reference key="1">
    <citation type="journal article" date="2006" name="PLoS Genet.">
        <title>The complete genome sequence and comparative genome analysis of the high pathogenicity Yersinia enterocolitica strain 8081.</title>
        <authorList>
            <person name="Thomson N.R."/>
            <person name="Howard S."/>
            <person name="Wren B.W."/>
            <person name="Holden M.T.G."/>
            <person name="Crossman L."/>
            <person name="Challis G.L."/>
            <person name="Churcher C."/>
            <person name="Mungall K."/>
            <person name="Brooks K."/>
            <person name="Chillingworth T."/>
            <person name="Feltwell T."/>
            <person name="Abdellah Z."/>
            <person name="Hauser H."/>
            <person name="Jagels K."/>
            <person name="Maddison M."/>
            <person name="Moule S."/>
            <person name="Sanders M."/>
            <person name="Whitehead S."/>
            <person name="Quail M.A."/>
            <person name="Dougan G."/>
            <person name="Parkhill J."/>
            <person name="Prentice M.B."/>
        </authorList>
    </citation>
    <scope>NUCLEOTIDE SEQUENCE [LARGE SCALE GENOMIC DNA]</scope>
    <source>
        <strain>NCTC 13174 / 8081</strain>
    </source>
</reference>
<protein>
    <recommendedName>
        <fullName evidence="1">Membrane-bound lytic murein transglycosylase F</fullName>
        <ecNumber evidence="1">4.2.2.n1</ecNumber>
    </recommendedName>
    <alternativeName>
        <fullName evidence="1">Murein lyase F</fullName>
    </alternativeName>
</protein>
<gene>
    <name evidence="1" type="primary">mltF</name>
    <name type="ordered locus">YE1031</name>
</gene>
<sequence length="486" mass="54685">MTRIKLNYFVIGVVALLLALALWPNIPWRNGQEGQLDRIKARGELRVSTISSPLIYSTGKDGPSGFDYELAKRFADYLGVKLVMTPHHNINDLFDTLDSDDADMIAAGLIYNSERLKRARTGPAYYSVSQQLVYRLGSPRPKSFSDLKGQLIVASGSAHMTTLKQLKQTKYPDLNWGSSVDRSGKELLEQVADGKLDYTLGDSVTIALLQRIHPQLAVAFDVTDEEPVTWYFQQSHDDSLYAAMLDFYSEMVEDGSLARLEEKYLGHVGSFDYVDTKTFLSAIDNVLPSFRPLFEKHAGEIDWRLLAAIAYQESHWNPQATSPTGVRGLMMLTRATASGLGVKDRVDPEESIRGGSVYLQRLMQKVPDTIPEDERIWFALAAYNLGYGHMLDARKLTKNQNGNPDSWVDVKMRLPMLSQKRYYPSTTYGYARGHEAYNYVENIRRYQVSLVGYLQEKEKKAAQHAAIEAELGKAYPVVGPGWSINN</sequence>
<dbReference type="EC" id="4.2.2.n1" evidence="1"/>
<dbReference type="EMBL" id="AM286415">
    <property type="protein sequence ID" value="CAL11130.1"/>
    <property type="molecule type" value="Genomic_DNA"/>
</dbReference>
<dbReference type="RefSeq" id="WP_005172712.1">
    <property type="nucleotide sequence ID" value="NC_008800.1"/>
</dbReference>
<dbReference type="RefSeq" id="YP_001005365.1">
    <property type="nucleotide sequence ID" value="NC_008800.1"/>
</dbReference>
<dbReference type="SMR" id="A1JKM2"/>
<dbReference type="CAZy" id="GH23">
    <property type="family name" value="Glycoside Hydrolase Family 23"/>
</dbReference>
<dbReference type="KEGG" id="yen:YE1031"/>
<dbReference type="PATRIC" id="fig|393305.7.peg.1127"/>
<dbReference type="eggNOG" id="COG4623">
    <property type="taxonomic scope" value="Bacteria"/>
</dbReference>
<dbReference type="HOGENOM" id="CLU_027494_0_1_6"/>
<dbReference type="OrthoDB" id="9815002at2"/>
<dbReference type="Proteomes" id="UP000000642">
    <property type="component" value="Chromosome"/>
</dbReference>
<dbReference type="GO" id="GO:0009279">
    <property type="term" value="C:cell outer membrane"/>
    <property type="evidence" value="ECO:0007669"/>
    <property type="project" value="UniProtKB-SubCell"/>
</dbReference>
<dbReference type="GO" id="GO:0008933">
    <property type="term" value="F:peptidoglycan lytic transglycosylase activity"/>
    <property type="evidence" value="ECO:0007669"/>
    <property type="project" value="UniProtKB-UniRule"/>
</dbReference>
<dbReference type="GO" id="GO:0016998">
    <property type="term" value="P:cell wall macromolecule catabolic process"/>
    <property type="evidence" value="ECO:0007669"/>
    <property type="project" value="UniProtKB-UniRule"/>
</dbReference>
<dbReference type="GO" id="GO:0071555">
    <property type="term" value="P:cell wall organization"/>
    <property type="evidence" value="ECO:0007669"/>
    <property type="project" value="UniProtKB-KW"/>
</dbReference>
<dbReference type="GO" id="GO:0009253">
    <property type="term" value="P:peptidoglycan catabolic process"/>
    <property type="evidence" value="ECO:0007669"/>
    <property type="project" value="TreeGrafter"/>
</dbReference>
<dbReference type="CDD" id="cd13403">
    <property type="entry name" value="MLTF-like"/>
    <property type="match status" value="1"/>
</dbReference>
<dbReference type="CDD" id="cd01009">
    <property type="entry name" value="PBP2_YfhD_N"/>
    <property type="match status" value="1"/>
</dbReference>
<dbReference type="FunFam" id="1.10.530.10:FF:000003">
    <property type="entry name" value="Membrane-bound lytic murein transglycosylase F"/>
    <property type="match status" value="1"/>
</dbReference>
<dbReference type="Gene3D" id="1.10.530.10">
    <property type="match status" value="1"/>
</dbReference>
<dbReference type="Gene3D" id="3.40.190.10">
    <property type="entry name" value="Periplasmic binding protein-like II"/>
    <property type="match status" value="2"/>
</dbReference>
<dbReference type="HAMAP" id="MF_02016">
    <property type="entry name" value="MltF"/>
    <property type="match status" value="1"/>
</dbReference>
<dbReference type="InterPro" id="IPR023346">
    <property type="entry name" value="Lysozyme-like_dom_sf"/>
</dbReference>
<dbReference type="InterPro" id="IPR023703">
    <property type="entry name" value="MltF"/>
</dbReference>
<dbReference type="InterPro" id="IPR001638">
    <property type="entry name" value="Solute-binding_3/MltF_N"/>
</dbReference>
<dbReference type="InterPro" id="IPR000189">
    <property type="entry name" value="Transglyc_AS"/>
</dbReference>
<dbReference type="InterPro" id="IPR008258">
    <property type="entry name" value="Transglycosylase_SLT_dom_1"/>
</dbReference>
<dbReference type="NCBIfam" id="NF008112">
    <property type="entry name" value="PRK10859.1"/>
    <property type="match status" value="1"/>
</dbReference>
<dbReference type="PANTHER" id="PTHR35936">
    <property type="entry name" value="MEMBRANE-BOUND LYTIC MUREIN TRANSGLYCOSYLASE F"/>
    <property type="match status" value="1"/>
</dbReference>
<dbReference type="PANTHER" id="PTHR35936:SF32">
    <property type="entry name" value="MEMBRANE-BOUND LYTIC MUREIN TRANSGLYCOSYLASE F"/>
    <property type="match status" value="1"/>
</dbReference>
<dbReference type="Pfam" id="PF00497">
    <property type="entry name" value="SBP_bac_3"/>
    <property type="match status" value="1"/>
</dbReference>
<dbReference type="Pfam" id="PF01464">
    <property type="entry name" value="SLT"/>
    <property type="match status" value="1"/>
</dbReference>
<dbReference type="SMART" id="SM00062">
    <property type="entry name" value="PBPb"/>
    <property type="match status" value="1"/>
</dbReference>
<dbReference type="SUPFAM" id="SSF53955">
    <property type="entry name" value="Lysozyme-like"/>
    <property type="match status" value="1"/>
</dbReference>
<dbReference type="SUPFAM" id="SSF53850">
    <property type="entry name" value="Periplasmic binding protein-like II"/>
    <property type="match status" value="1"/>
</dbReference>
<dbReference type="PROSITE" id="PS00922">
    <property type="entry name" value="TRANSGLYCOSYLASE"/>
    <property type="match status" value="1"/>
</dbReference>
<comment type="function">
    <text evidence="1">Murein-degrading enzyme that degrades murein glycan strands and insoluble, high-molecular weight murein sacculi, with the concomitant formation of a 1,6-anhydromuramoyl product. Lytic transglycosylases (LTs) play an integral role in the metabolism of the peptidoglycan (PG) sacculus. Their lytic action creates space within the PG sacculus to allow for its expansion as well as for the insertion of various structures such as secretion systems and flagella.</text>
</comment>
<comment type="catalytic activity">
    <reaction evidence="1">
        <text>Exolytic cleavage of the (1-&gt;4)-beta-glycosidic linkage between N-acetylmuramic acid (MurNAc) and N-acetylglucosamine (GlcNAc) residues in peptidoglycan, from either the reducing or the non-reducing ends of the peptidoglycan chains, with concomitant formation of a 1,6-anhydrobond in the MurNAc residue.</text>
        <dbReference type="EC" id="4.2.2.n1"/>
    </reaction>
</comment>
<comment type="subcellular location">
    <subcellularLocation>
        <location>Cell outer membrane</location>
        <topology>Peripheral membrane protein</topology>
    </subcellularLocation>
    <text evidence="1">Attached to the inner leaflet of the outer membrane.</text>
</comment>
<comment type="domain">
    <text evidence="1">The N-terminal domain does not have lytic activity and probably modulates enzymatic activity. The C-terminal domain is the catalytic active domain.</text>
</comment>
<comment type="similarity">
    <text evidence="1">In the N-terminal section; belongs to the bacterial solute-binding protein 3 family.</text>
</comment>
<comment type="similarity">
    <text evidence="1">In the C-terminal section; belongs to the transglycosylase Slt family.</text>
</comment>
<evidence type="ECO:0000255" key="1">
    <source>
        <dbReference type="HAMAP-Rule" id="MF_02016"/>
    </source>
</evidence>
<keyword id="KW-0998">Cell outer membrane</keyword>
<keyword id="KW-0961">Cell wall biogenesis/degradation</keyword>
<keyword id="KW-0456">Lyase</keyword>
<keyword id="KW-0472">Membrane</keyword>
<keyword id="KW-0732">Signal</keyword>
<feature type="signal peptide" evidence="1">
    <location>
        <begin position="1"/>
        <end position="21"/>
    </location>
</feature>
<feature type="chain" id="PRO_5000200984" description="Membrane-bound lytic murein transglycosylase F">
    <location>
        <begin position="22"/>
        <end position="486"/>
    </location>
</feature>
<feature type="region of interest" description="Non-LT domain" evidence="1">
    <location>
        <begin position="22"/>
        <end position="268"/>
    </location>
</feature>
<feature type="region of interest" description="LT domain" evidence="1">
    <location>
        <begin position="269"/>
        <end position="486"/>
    </location>
</feature>
<feature type="active site" evidence="1">
    <location>
        <position position="313"/>
    </location>
</feature>
<proteinExistence type="inferred from homology"/>
<name>MLTF_YERE8</name>
<accession>A1JKM2</accession>
<organism>
    <name type="scientific">Yersinia enterocolitica serotype O:8 / biotype 1B (strain NCTC 13174 / 8081)</name>
    <dbReference type="NCBI Taxonomy" id="393305"/>
    <lineage>
        <taxon>Bacteria</taxon>
        <taxon>Pseudomonadati</taxon>
        <taxon>Pseudomonadota</taxon>
        <taxon>Gammaproteobacteria</taxon>
        <taxon>Enterobacterales</taxon>
        <taxon>Yersiniaceae</taxon>
        <taxon>Yersinia</taxon>
    </lineage>
</organism>